<name>THIC_SYNJA</name>
<protein>
    <recommendedName>
        <fullName evidence="1">Phosphomethylpyrimidine synthase</fullName>
        <ecNumber evidence="1">4.1.99.17</ecNumber>
    </recommendedName>
    <alternativeName>
        <fullName evidence="1">Hydroxymethylpyrimidine phosphate synthase</fullName>
        <shortName evidence="1">HMP-P synthase</shortName>
        <shortName evidence="1">HMP-phosphate synthase</shortName>
        <shortName evidence="1">HMPP synthase</shortName>
    </alternativeName>
    <alternativeName>
        <fullName evidence="1">Thiamine biosynthesis protein ThiC</fullName>
    </alternativeName>
</protein>
<proteinExistence type="inferred from homology"/>
<gene>
    <name evidence="1" type="primary">thiC</name>
    <name type="ordered locus">CYA_0011</name>
</gene>
<evidence type="ECO:0000255" key="1">
    <source>
        <dbReference type="HAMAP-Rule" id="MF_00089"/>
    </source>
</evidence>
<accession>Q2JY68</accession>
<dbReference type="EC" id="4.1.99.17" evidence="1"/>
<dbReference type="EMBL" id="CP000239">
    <property type="protein sequence ID" value="ABC98244.1"/>
    <property type="molecule type" value="Genomic_DNA"/>
</dbReference>
<dbReference type="RefSeq" id="WP_011428936.1">
    <property type="nucleotide sequence ID" value="NC_007775.1"/>
</dbReference>
<dbReference type="SMR" id="Q2JY68"/>
<dbReference type="STRING" id="321327.CYA_0011"/>
<dbReference type="KEGG" id="cya:CYA_0011"/>
<dbReference type="eggNOG" id="COG0422">
    <property type="taxonomic scope" value="Bacteria"/>
</dbReference>
<dbReference type="HOGENOM" id="CLU_013181_2_1_3"/>
<dbReference type="OrthoDB" id="9805897at2"/>
<dbReference type="UniPathway" id="UPA00060"/>
<dbReference type="Proteomes" id="UP000008818">
    <property type="component" value="Chromosome"/>
</dbReference>
<dbReference type="GO" id="GO:0005829">
    <property type="term" value="C:cytosol"/>
    <property type="evidence" value="ECO:0007669"/>
    <property type="project" value="TreeGrafter"/>
</dbReference>
<dbReference type="GO" id="GO:0051539">
    <property type="term" value="F:4 iron, 4 sulfur cluster binding"/>
    <property type="evidence" value="ECO:0007669"/>
    <property type="project" value="UniProtKB-KW"/>
</dbReference>
<dbReference type="GO" id="GO:0016830">
    <property type="term" value="F:carbon-carbon lyase activity"/>
    <property type="evidence" value="ECO:0007669"/>
    <property type="project" value="InterPro"/>
</dbReference>
<dbReference type="GO" id="GO:0008270">
    <property type="term" value="F:zinc ion binding"/>
    <property type="evidence" value="ECO:0007669"/>
    <property type="project" value="UniProtKB-UniRule"/>
</dbReference>
<dbReference type="GO" id="GO:0009228">
    <property type="term" value="P:thiamine biosynthetic process"/>
    <property type="evidence" value="ECO:0007669"/>
    <property type="project" value="UniProtKB-KW"/>
</dbReference>
<dbReference type="GO" id="GO:0009229">
    <property type="term" value="P:thiamine diphosphate biosynthetic process"/>
    <property type="evidence" value="ECO:0007669"/>
    <property type="project" value="UniProtKB-UniRule"/>
</dbReference>
<dbReference type="FunFam" id="3.20.20.540:FF:000001">
    <property type="entry name" value="Phosphomethylpyrimidine synthase"/>
    <property type="match status" value="1"/>
</dbReference>
<dbReference type="Gene3D" id="6.10.250.620">
    <property type="match status" value="1"/>
</dbReference>
<dbReference type="Gene3D" id="3.20.20.540">
    <property type="entry name" value="Radical SAM ThiC family, central domain"/>
    <property type="match status" value="1"/>
</dbReference>
<dbReference type="HAMAP" id="MF_00089">
    <property type="entry name" value="ThiC"/>
    <property type="match status" value="1"/>
</dbReference>
<dbReference type="InterPro" id="IPR037509">
    <property type="entry name" value="ThiC"/>
</dbReference>
<dbReference type="InterPro" id="IPR038521">
    <property type="entry name" value="ThiC/Bza_core_dom"/>
</dbReference>
<dbReference type="InterPro" id="IPR002817">
    <property type="entry name" value="ThiC/BzaA/B"/>
</dbReference>
<dbReference type="NCBIfam" id="NF006763">
    <property type="entry name" value="PRK09284.1"/>
    <property type="match status" value="1"/>
</dbReference>
<dbReference type="NCBIfam" id="NF009895">
    <property type="entry name" value="PRK13352.1"/>
    <property type="match status" value="1"/>
</dbReference>
<dbReference type="NCBIfam" id="TIGR00190">
    <property type="entry name" value="thiC"/>
    <property type="match status" value="1"/>
</dbReference>
<dbReference type="PANTHER" id="PTHR30557:SF1">
    <property type="entry name" value="PHOSPHOMETHYLPYRIMIDINE SYNTHASE, CHLOROPLASTIC"/>
    <property type="match status" value="1"/>
</dbReference>
<dbReference type="PANTHER" id="PTHR30557">
    <property type="entry name" value="THIAMINE BIOSYNTHESIS PROTEIN THIC"/>
    <property type="match status" value="1"/>
</dbReference>
<dbReference type="Pfam" id="PF01964">
    <property type="entry name" value="ThiC_Rad_SAM"/>
    <property type="match status" value="1"/>
</dbReference>
<dbReference type="SFLD" id="SFLDF00407">
    <property type="entry name" value="phosphomethylpyrimidine_syntha"/>
    <property type="match status" value="1"/>
</dbReference>
<dbReference type="SFLD" id="SFLDG01114">
    <property type="entry name" value="phosphomethylpyrimidine_syntha"/>
    <property type="match status" value="1"/>
</dbReference>
<dbReference type="SFLD" id="SFLDS00113">
    <property type="entry name" value="Radical_SAM_Phosphomethylpyrim"/>
    <property type="match status" value="1"/>
</dbReference>
<sequence length="455" mass="50738">MRSEWVARRRGQANVTQMHFARQGVITEEMDYVARRENLPPELIRSEVARGRMIIPANINHTNLEPMCIGIASRCKVNANIGASPSSSGLAEELEKLKLAIKYGADTVMDLSTGGGDLDEIRTAIIQASPVPIGTVPIYQALESVHGNVEKLSAEDILHIIEKQAQQGVDYMTIHAGILIEYLPLVRNRLTGIVSRGGGILARWMLAHHKQNPLYTHFRDIIEIFKKYDVSFSLGDALRPGCLHDASDEAQMAELKTLGQLTRMAWEHDVQVMVEGPGHVPMDQIEFNVRKQMEECDEAPFYVLGPLVTDIAAGYDHISSAIGAALAGWYGAAMLCYVTPKEHLGLPNAEDVRNGLIAYKIAAHAADIARHRPGARDRDDEMSRARYNFDWNRQFELSLDPERAREYHDETLPADIYKTAEFCSMCGPKFCPMQTKMDAEALSELERFLAKQPTA</sequence>
<keyword id="KW-0004">4Fe-4S</keyword>
<keyword id="KW-0408">Iron</keyword>
<keyword id="KW-0411">Iron-sulfur</keyword>
<keyword id="KW-0456">Lyase</keyword>
<keyword id="KW-0479">Metal-binding</keyword>
<keyword id="KW-0949">S-adenosyl-L-methionine</keyword>
<keyword id="KW-0784">Thiamine biosynthesis</keyword>
<keyword id="KW-0862">Zinc</keyword>
<reference key="1">
    <citation type="journal article" date="2007" name="ISME J.">
        <title>Population level functional diversity in a microbial community revealed by comparative genomic and metagenomic analyses.</title>
        <authorList>
            <person name="Bhaya D."/>
            <person name="Grossman A.R."/>
            <person name="Steunou A.-S."/>
            <person name="Khuri N."/>
            <person name="Cohan F.M."/>
            <person name="Hamamura N."/>
            <person name="Melendrez M.C."/>
            <person name="Bateson M.M."/>
            <person name="Ward D.M."/>
            <person name="Heidelberg J.F."/>
        </authorList>
    </citation>
    <scope>NUCLEOTIDE SEQUENCE [LARGE SCALE GENOMIC DNA]</scope>
    <source>
        <strain>JA-3-3Ab</strain>
    </source>
</reference>
<comment type="function">
    <text evidence="1">Catalyzes the synthesis of the hydroxymethylpyrimidine phosphate (HMP-P) moiety of thiamine from aminoimidazole ribotide (AIR) in a radical S-adenosyl-L-methionine (SAM)-dependent reaction.</text>
</comment>
<comment type="catalytic activity">
    <reaction evidence="1">
        <text>5-amino-1-(5-phospho-beta-D-ribosyl)imidazole + S-adenosyl-L-methionine = 4-amino-2-methyl-5-(phosphooxymethyl)pyrimidine + CO + 5'-deoxyadenosine + formate + L-methionine + 3 H(+)</text>
        <dbReference type="Rhea" id="RHEA:24840"/>
        <dbReference type="ChEBI" id="CHEBI:15378"/>
        <dbReference type="ChEBI" id="CHEBI:15740"/>
        <dbReference type="ChEBI" id="CHEBI:17245"/>
        <dbReference type="ChEBI" id="CHEBI:17319"/>
        <dbReference type="ChEBI" id="CHEBI:57844"/>
        <dbReference type="ChEBI" id="CHEBI:58354"/>
        <dbReference type="ChEBI" id="CHEBI:59789"/>
        <dbReference type="ChEBI" id="CHEBI:137981"/>
        <dbReference type="EC" id="4.1.99.17"/>
    </reaction>
</comment>
<comment type="cofactor">
    <cofactor evidence="1">
        <name>[4Fe-4S] cluster</name>
        <dbReference type="ChEBI" id="CHEBI:49883"/>
    </cofactor>
    <text evidence="1">Binds 1 [4Fe-4S] cluster per subunit. The cluster is coordinated with 3 cysteines and an exchangeable S-adenosyl-L-methionine.</text>
</comment>
<comment type="pathway">
    <text evidence="1">Cofactor biosynthesis; thiamine diphosphate biosynthesis.</text>
</comment>
<comment type="similarity">
    <text evidence="1">Belongs to the ThiC family.</text>
</comment>
<feature type="chain" id="PRO_0000242309" description="Phosphomethylpyrimidine synthase">
    <location>
        <begin position="1"/>
        <end position="455"/>
    </location>
</feature>
<feature type="binding site" evidence="1">
    <location>
        <position position="80"/>
    </location>
    <ligand>
        <name>substrate</name>
    </ligand>
</feature>
<feature type="binding site" evidence="1">
    <location>
        <position position="109"/>
    </location>
    <ligand>
        <name>substrate</name>
    </ligand>
</feature>
<feature type="binding site" evidence="1">
    <location>
        <position position="139"/>
    </location>
    <ligand>
        <name>substrate</name>
    </ligand>
</feature>
<feature type="binding site" evidence="1">
    <location>
        <position position="175"/>
    </location>
    <ligand>
        <name>substrate</name>
    </ligand>
</feature>
<feature type="binding site" evidence="1">
    <location>
        <begin position="195"/>
        <end position="197"/>
    </location>
    <ligand>
        <name>substrate</name>
    </ligand>
</feature>
<feature type="binding site" evidence="1">
    <location>
        <begin position="236"/>
        <end position="239"/>
    </location>
    <ligand>
        <name>substrate</name>
    </ligand>
</feature>
<feature type="binding site" evidence="1">
    <location>
        <position position="275"/>
    </location>
    <ligand>
        <name>substrate</name>
    </ligand>
</feature>
<feature type="binding site" evidence="1">
    <location>
        <position position="279"/>
    </location>
    <ligand>
        <name>Zn(2+)</name>
        <dbReference type="ChEBI" id="CHEBI:29105"/>
    </ligand>
</feature>
<feature type="binding site" evidence="1">
    <location>
        <position position="302"/>
    </location>
    <ligand>
        <name>substrate</name>
    </ligand>
</feature>
<feature type="binding site" evidence="1">
    <location>
        <position position="343"/>
    </location>
    <ligand>
        <name>Zn(2+)</name>
        <dbReference type="ChEBI" id="CHEBI:29105"/>
    </ligand>
</feature>
<feature type="binding site" evidence="1">
    <location>
        <position position="423"/>
    </location>
    <ligand>
        <name>[4Fe-4S] cluster</name>
        <dbReference type="ChEBI" id="CHEBI:49883"/>
        <note>4Fe-4S-S-AdoMet</note>
    </ligand>
</feature>
<feature type="binding site" evidence="1">
    <location>
        <position position="426"/>
    </location>
    <ligand>
        <name>[4Fe-4S] cluster</name>
        <dbReference type="ChEBI" id="CHEBI:49883"/>
        <note>4Fe-4S-S-AdoMet</note>
    </ligand>
</feature>
<feature type="binding site" evidence="1">
    <location>
        <position position="431"/>
    </location>
    <ligand>
        <name>[4Fe-4S] cluster</name>
        <dbReference type="ChEBI" id="CHEBI:49883"/>
        <note>4Fe-4S-S-AdoMet</note>
    </ligand>
</feature>
<organism>
    <name type="scientific">Synechococcus sp. (strain JA-3-3Ab)</name>
    <name type="common">Cyanobacteria bacterium Yellowstone A-Prime</name>
    <dbReference type="NCBI Taxonomy" id="321327"/>
    <lineage>
        <taxon>Bacteria</taxon>
        <taxon>Bacillati</taxon>
        <taxon>Cyanobacteriota</taxon>
        <taxon>Cyanophyceae</taxon>
        <taxon>Synechococcales</taxon>
        <taxon>Synechococcaceae</taxon>
        <taxon>Synechococcus</taxon>
    </lineage>
</organism>